<reference key="1">
    <citation type="journal article" date="2016" name="Acta Crystallogr. F Struct. Biol. Commun.">
        <title>Expression, crystallization and structure elucidation of gamma-terpinene synthase from Thymus vulgaris.</title>
        <authorList>
            <person name="Rudolph K."/>
            <person name="Parthier C."/>
            <person name="Egerer-Sieber C."/>
            <person name="Geiger D."/>
            <person name="Muller Y.A."/>
            <person name="Kreis W."/>
            <person name="Mueller-Uri F."/>
        </authorList>
    </citation>
    <scope>NUCLEOTIDE SEQUENCE [MRNA]</scope>
    <scope>X-RAY CRYSTALLOGRAPHY (1.65 ANGSTROMS)</scope>
    <scope>HOMODIMER</scope>
    <scope>FUNCTION</scope>
    <scope>CATALYTIC ACTIVITY</scope>
    <scope>PATHWAY</scope>
    <scope>MUTAGENESIS OF ASP-302 AND THR-511</scope>
    <source>
        <tissue>Leaf</tissue>
    </source>
</reference>
<reference key="2">
    <citation type="journal article" date="2015" name="Crit. Rev. Food Sci. Nutr.">
        <title>The bioactivity and toxicological actions of carvacrol.</title>
        <authorList>
            <person name="Suntres Z.E."/>
            <person name="Coccimiglio J."/>
            <person name="Alipour M."/>
        </authorList>
    </citation>
    <scope>REVIEW ON CARVACROL</scope>
    <scope>BIOTECHNOLOGY</scope>
</reference>
<reference key="3">
    <citation type="journal article" date="2017" name="Plant Physiol. Biochem.">
        <title>Tissue-specific gene-expression patterns of genes associated with thymol/carvacrol biosynthesis in thyme (Thymus vulgaris L.) and their differential changes upon treatment with abiotic elicitors.</title>
        <authorList>
            <person name="Majdi M."/>
            <person name="Malekzadeh-Mashhady A."/>
            <person name="Maroufi A."/>
            <person name="Crocoll C."/>
        </authorList>
    </citation>
    <scope>TISSUE SPECIFICITY</scope>
    <scope>INDUCTION BY JASMONIC ACID; SALICYLIC ACID AND UV-C</scope>
</reference>
<reference key="4">
    <citation type="journal article" date="2018" name="Phytother. Res.">
        <title>Thymol, thyme, and other plant sources: Health and potential uses.</title>
        <authorList>
            <person name="Salehi B."/>
            <person name="Mishra A.P."/>
            <person name="Shukla I."/>
            <person name="Sharifi-Rad M."/>
            <person name="Contreras M.D.M."/>
            <person name="Segura-Carretero A."/>
            <person name="Fathi H."/>
            <person name="Nasrabadi N.N."/>
            <person name="Kobarfard F."/>
            <person name="Sharifi-Rad J."/>
        </authorList>
    </citation>
    <scope>REVIEW ON THYMOL</scope>
    <scope>BIOTECHNOLOGY</scope>
</reference>
<reference key="5">
    <citation type="journal article" date="2019" name="Nat. Prod. Res.">
        <title>Synthesis and antifungal activity of carvacrol and thymol esters with heteroaromatic carboxylic acids.</title>
        <authorList>
            <person name="Wang K."/>
            <person name="Jiang S."/>
            <person name="Yang Y."/>
            <person name="Fan L."/>
            <person name="Su F."/>
            <person name="Ye M."/>
        </authorList>
    </citation>
    <scope>REVIEW ON CARVACROL AND THYMOL</scope>
    <scope>BIOTECHNOLOGY</scope>
</reference>
<reference key="6">
    <citation type="journal article" date="2020" name="Front. Plant Sci.">
        <title>Carvacrol, a plant metabolite targeting viral protease (Mpro) and ACE2 in host cells can be a possible candidate for COVID-19.</title>
        <authorList>
            <person name="Javed H."/>
            <person name="Meeran M.F.N."/>
            <person name="Jha N.K."/>
            <person name="Ojha S."/>
        </authorList>
    </citation>
    <scope>REVIEW ON CARVACROL EFFECTS ON COVID-19</scope>
    <scope>BIOTECHNOLOGY</scope>
</reference>
<reference key="7">
    <citation type="journal article" date="2020" name="J. Biomol. Struct. Dyn.">
        <title>Identification of phytochemical inhibitors against main protease of COVID-19 using molecular modeling approaches.</title>
        <authorList>
            <person name="Kumar A."/>
            <person name="Choudhir G."/>
            <person name="Shukla S.K."/>
            <person name="Sharma M."/>
            <person name="Tyagi P."/>
            <person name="Bhushan A."/>
            <person name="Rathore M."/>
        </authorList>
    </citation>
    <scope>REVIEW ON CARVACROL EFFECTS ON COVID-19</scope>
    <scope>BIOTECHNOLOGY</scope>
</reference>
<reference key="8">
    <citation type="journal article" date="2020" name="J. Biomol. Struct. Dyn.">
        <title>Synthesis, anticholinesterase activity and molecular modeling studies of novel carvacrol-substituted amide derivatives.</title>
        <authorList>
            <person name="Zengin Kurt B."/>
            <person name="Durdagi S."/>
            <person name="Celebi G."/>
            <person name="Ekhteiari Salmas R."/>
            <person name="Sonmez F."/>
        </authorList>
    </citation>
    <scope>REVIEW ON CARVACROL DERIVATIVES</scope>
    <scope>BIOTECHNOLOGY</scope>
</reference>
<reference key="9">
    <citation type="journal article" date="2020" name="J. Mol. Struct.">
        <title>Computational evaluation of major components from plant essential oils as potent inhibitors of SARS-CoV-2 spike protein.</title>
        <authorList>
            <person name="Kulkarni S.A."/>
            <person name="Nagarajan S.K."/>
            <person name="Ramesh V."/>
            <person name="Palaniyandi V."/>
            <person name="Selvam S.P."/>
            <person name="Madhavan T."/>
        </authorList>
    </citation>
    <scope>REVIEW ON PLANT ESSENTIAL OILS EFFECTS ON COVID-19</scope>
    <scope>BIOTECHNOLOGY</scope>
</reference>
<reference key="10">
    <citation type="journal article" date="2021" name="Front. Chem.">
        <title>Antiviral essential oil components against SARS-CoV-2 in pre-procedural mouth rinses for dental settings during COVID-19: A computational study.</title>
        <authorList>
            <person name="Yadalam P.K."/>
            <person name="Varatharajan K."/>
            <person name="Rajapandian K."/>
            <person name="Chopra P."/>
            <person name="Arumuganainar D."/>
            <person name="Nagarathnam T."/>
            <person name="Sohn H."/>
            <person name="Madhavan T."/>
        </authorList>
    </citation>
    <scope>REVIEW ON PLANT ESSENTIAL OILS EFFECTS ON COVID-19</scope>
    <scope>BIOTECHNOLOGY</scope>
</reference>
<evidence type="ECO:0000250" key="1">
    <source>
        <dbReference type="UniProtKB" id="A0A1C9J6A7"/>
    </source>
</evidence>
<evidence type="ECO:0000250" key="2">
    <source>
        <dbReference type="UniProtKB" id="E2E2P0"/>
    </source>
</evidence>
<evidence type="ECO:0000250" key="3">
    <source>
        <dbReference type="UniProtKB" id="Q9X839"/>
    </source>
</evidence>
<evidence type="ECO:0000269" key="4">
    <source>
    </source>
</evidence>
<evidence type="ECO:0000269" key="5">
    <source>
    </source>
</evidence>
<evidence type="ECO:0000303" key="6">
    <source>
    </source>
</evidence>
<evidence type="ECO:0000303" key="7">
    <source>
    </source>
</evidence>
<evidence type="ECO:0000303" key="8">
    <source>
    </source>
</evidence>
<evidence type="ECO:0000303" key="9">
    <source>
    </source>
</evidence>
<evidence type="ECO:0000303" key="10">
    <source>
    </source>
</evidence>
<evidence type="ECO:0000303" key="11">
    <source>
    </source>
</evidence>
<evidence type="ECO:0000303" key="12">
    <source>
    </source>
</evidence>
<evidence type="ECO:0000303" key="13">
    <source>
    </source>
</evidence>
<evidence type="ECO:0000303" key="14">
    <source>
    </source>
</evidence>
<evidence type="ECO:0000305" key="15"/>
<evidence type="ECO:0007829" key="16">
    <source>
        <dbReference type="PDB" id="5C05"/>
    </source>
</evidence>
<comment type="function">
    <text evidence="4">Involved in the biosynthesis of phenolic monoterpenes natural products thymol and carvacrol which have a broad range of biological activities acting as antimicrobial compounds, insecticides, antioxidants and pharmaceutical agents (PubMed:26750479). Monoterpene synthase which catalyzes the conversion of geranyl diphosphate (GPP) to gamma-terpinene and the minor products alpha-thujene, alpha-terpinene, myrcene, sabinene, (+)-R-limonene, alpha-pinene and alpha-phellandrene (PubMed:26750479).</text>
</comment>
<comment type="catalytic activity">
    <reaction evidence="4">
        <text>(2E)-geranyl diphosphate = gamma-terpinene + diphosphate</text>
        <dbReference type="Rhea" id="RHEA:32559"/>
        <dbReference type="ChEBI" id="CHEBI:10577"/>
        <dbReference type="ChEBI" id="CHEBI:33019"/>
        <dbReference type="ChEBI" id="CHEBI:58057"/>
        <dbReference type="EC" id="4.2.3.114"/>
    </reaction>
    <physiologicalReaction direction="left-to-right" evidence="4">
        <dbReference type="Rhea" id="RHEA:32560"/>
    </physiologicalReaction>
</comment>
<comment type="catalytic activity">
    <reaction evidence="2">
        <text>(2E)-geranyl diphosphate = alpha-terpinene + diphosphate</text>
        <dbReference type="Rhea" id="RHEA:32563"/>
        <dbReference type="ChEBI" id="CHEBI:10334"/>
        <dbReference type="ChEBI" id="CHEBI:33019"/>
        <dbReference type="ChEBI" id="CHEBI:58057"/>
        <dbReference type="EC" id="4.2.3.115"/>
    </reaction>
    <physiologicalReaction direction="left-to-right" evidence="2">
        <dbReference type="Rhea" id="RHEA:32564"/>
    </physiologicalReaction>
</comment>
<comment type="cofactor">
    <cofactor evidence="2">
        <name>Mn(2+)</name>
        <dbReference type="ChEBI" id="CHEBI:29035"/>
    </cofactor>
    <cofactor evidence="2">
        <name>Mg(2+)</name>
        <dbReference type="ChEBI" id="CHEBI:18420"/>
    </cofactor>
    <text evidence="2">Binds 3 Mg(2+) or Mn(2+) ions per subunit.</text>
</comment>
<comment type="pathway">
    <text evidence="4">Secondary metabolite biosynthesis; terpenoid biosynthesis.</text>
</comment>
<comment type="subunit">
    <text evidence="4">Homodimer.</text>
</comment>
<comment type="tissue specificity">
    <text evidence="5">Mostly expressed in flowers and, to a lower extent, in leaves, especially in glandular trichomes.</text>
</comment>
<comment type="induction">
    <text evidence="5">Induced by jasmonic acid (MeJA), salicylic acid (SA) and UV-C irradiation.</text>
</comment>
<comment type="domain">
    <text evidence="3">The Asp-Asp-Xaa-Xaa-Asp/Glu (DDXXD/E) motif is important for the catalytic activity, presumably through binding to Mg(2+).</text>
</comment>
<comment type="biotechnology">
    <text evidence="8 9 12 14">The monoterpenic phenol thymol is widely used as a fragrance and a flavoring ingredient in food and cosmetic industries (PubMed:29785774). Its derivatives have also several biological and pharmacological properties such as antimicrobial, antioxidant, anticarcinogenesis, anti-inflammatory and antispasmodic activities (PubMed:29785774, PubMed:29874939). Medical applications include the treatment of disorders affecting the respiratory, nervous, and cardiovascular systems (PubMed:29785774). It may also act as a growth enhancer and immunomodulator (PubMed:29785774). Thymol may also have antiviral activity toward COVID-19 by binding to the S1 receptor binding domain of the SARS-CoV-2 spike (S) glycoprotein (PubMed:32834111, PubMed:33855010).</text>
</comment>
<comment type="biotechnology">
    <text evidence="6 9 10 11 12 13 14">The monoterpenic phenol carvacrol is commonly used as a fragrance and a food flavoring ingredient and preservative (PubMed:24915411). Its derivatives exhibit also various biological and pharmacological properties including antioxidant, antibacterial, antifungal, insecticid, nematicid, anticancer, anti-inflammatory, hepatoprotective, spasmolytic, and vasorelaxant (PubMed:24915411, PubMed:29874939, PubMed:30836858, PubMed:33664752). Phytochemical inhibitor targeting the main SARS-CoV-2 viral protease (Mpro) and ACE2 in human host cells, carvacrol is a possible candidate for treating COVID-19 (PubMed:32448034, PubMed:33664752). Carvacrol may also have antiviral activity toward COVID-19 by binding to the S1 receptor binding domain of the SARS-CoV-2 spike (S) glycoprotein (PubMed:32834111, PubMed:33855010).</text>
</comment>
<comment type="similarity">
    <text evidence="15">Belongs to the terpene synthase family.</text>
</comment>
<feature type="chain" id="PRO_0000453309" description="Gamma-terpinene synthase 1">
    <location>
        <begin position="1"/>
        <end position="542"/>
    </location>
</feature>
<feature type="region of interest" description="Homodimerization" evidence="4">
    <location>
        <begin position="301"/>
        <end position="307"/>
    </location>
</feature>
<feature type="region of interest" description="Homodimerization" evidence="4">
    <location>
        <begin position="373"/>
        <end position="410"/>
    </location>
</feature>
<feature type="short sequence motif" description="DDXXD motif" evidence="3">
    <location>
        <begin position="295"/>
        <end position="299"/>
    </location>
</feature>
<feature type="binding site" evidence="1">
    <location>
        <position position="295"/>
    </location>
    <ligand>
        <name>Mn(2+)</name>
        <dbReference type="ChEBI" id="CHEBI:29035"/>
        <label>1</label>
    </ligand>
</feature>
<feature type="binding site" evidence="1">
    <location>
        <position position="295"/>
    </location>
    <ligand>
        <name>Mn(2+)</name>
        <dbReference type="ChEBI" id="CHEBI:29035"/>
        <label>2</label>
    </ligand>
</feature>
<feature type="binding site" evidence="1">
    <location>
        <position position="299"/>
    </location>
    <ligand>
        <name>Mn(2+)</name>
        <dbReference type="ChEBI" id="CHEBI:29035"/>
        <label>1</label>
    </ligand>
</feature>
<feature type="binding site" evidence="1">
    <location>
        <position position="299"/>
    </location>
    <ligand>
        <name>Mn(2+)</name>
        <dbReference type="ChEBI" id="CHEBI:29035"/>
        <label>2</label>
    </ligand>
</feature>
<feature type="binding site" evidence="1">
    <location>
        <position position="439"/>
    </location>
    <ligand>
        <name>Mn(2+)</name>
        <dbReference type="ChEBI" id="CHEBI:29035"/>
        <label>3</label>
    </ligand>
</feature>
<feature type="binding site" evidence="1">
    <location>
        <position position="447"/>
    </location>
    <ligand>
        <name>Mn(2+)</name>
        <dbReference type="ChEBI" id="CHEBI:29035"/>
        <label>3</label>
    </ligand>
</feature>
<feature type="site" description="Required for gamma-terpinene synthase activity" evidence="4">
    <location>
        <position position="302"/>
    </location>
</feature>
<feature type="site" description="Required for gamma-terpinene synthase activity" evidence="4">
    <location>
        <position position="511"/>
    </location>
</feature>
<feature type="mutagenesis site" description="Abolished gamma-terpinene synthase activity." evidence="4">
    <original>D</original>
    <variation>G</variation>
    <location>
        <position position="302"/>
    </location>
</feature>
<feature type="mutagenesis site" description="Reduced gamma-terpinene synthase activity." evidence="4">
    <original>T</original>
    <variation>A</variation>
    <location>
        <position position="511"/>
    </location>
</feature>
<feature type="helix" evidence="16">
    <location>
        <begin position="14"/>
        <end position="18"/>
    </location>
</feature>
<feature type="helix" evidence="16">
    <location>
        <begin position="28"/>
        <end position="45"/>
    </location>
</feature>
<feature type="helix" evidence="16">
    <location>
        <begin position="51"/>
        <end position="63"/>
    </location>
</feature>
<feature type="helix" evidence="16">
    <location>
        <begin position="67"/>
        <end position="69"/>
    </location>
</feature>
<feature type="helix" evidence="16">
    <location>
        <begin position="71"/>
        <end position="84"/>
    </location>
</feature>
<feature type="turn" evidence="16">
    <location>
        <begin position="85"/>
        <end position="87"/>
    </location>
</feature>
<feature type="strand" evidence="16">
    <location>
        <begin position="88"/>
        <end position="91"/>
    </location>
</feature>
<feature type="helix" evidence="16">
    <location>
        <begin position="96"/>
        <end position="108"/>
    </location>
</feature>
<feature type="helix" evidence="16">
    <location>
        <begin position="115"/>
        <end position="121"/>
    </location>
</feature>
<feature type="strand" evidence="16">
    <location>
        <begin position="126"/>
        <end position="129"/>
    </location>
</feature>
<feature type="helix" evidence="16">
    <location>
        <begin position="131"/>
        <end position="135"/>
    </location>
</feature>
<feature type="helix" evidence="16">
    <location>
        <begin position="137"/>
        <end position="147"/>
    </location>
</feature>
<feature type="helix" evidence="16">
    <location>
        <begin position="155"/>
        <end position="174"/>
    </location>
</feature>
<feature type="helix" evidence="16">
    <location>
        <begin position="179"/>
        <end position="190"/>
    </location>
</feature>
<feature type="helix" evidence="16">
    <location>
        <begin position="193"/>
        <end position="195"/>
    </location>
</feature>
<feature type="turn" evidence="16">
    <location>
        <begin position="198"/>
        <end position="201"/>
    </location>
</feature>
<feature type="helix" evidence="16">
    <location>
        <begin position="202"/>
        <end position="211"/>
    </location>
</feature>
<feature type="helix" evidence="16">
    <location>
        <begin position="217"/>
        <end position="248"/>
    </location>
</feature>
<feature type="helix" evidence="16">
    <location>
        <begin position="250"/>
        <end position="253"/>
    </location>
</feature>
<feature type="helix" evidence="16">
    <location>
        <begin position="261"/>
        <end position="269"/>
    </location>
</feature>
<feature type="helix" evidence="16">
    <location>
        <begin position="278"/>
        <end position="300"/>
    </location>
</feature>
<feature type="helix" evidence="16">
    <location>
        <begin position="304"/>
        <end position="316"/>
    </location>
</feature>
<feature type="helix" evidence="16">
    <location>
        <begin position="320"/>
        <end position="324"/>
    </location>
</feature>
<feature type="helix" evidence="16">
    <location>
        <begin position="327"/>
        <end position="351"/>
    </location>
</feature>
<feature type="helix" evidence="16">
    <location>
        <begin position="356"/>
        <end position="379"/>
    </location>
</feature>
<feature type="helix" evidence="16">
    <location>
        <begin position="385"/>
        <end position="395"/>
    </location>
</feature>
<feature type="helix" evidence="16">
    <location>
        <begin position="398"/>
        <end position="405"/>
    </location>
</feature>
<feature type="helix" evidence="16">
    <location>
        <begin position="406"/>
        <end position="408"/>
    </location>
</feature>
<feature type="helix" evidence="16">
    <location>
        <begin position="415"/>
        <end position="421"/>
    </location>
</feature>
<feature type="turn" evidence="16">
    <location>
        <begin position="422"/>
        <end position="424"/>
    </location>
</feature>
<feature type="helix" evidence="16">
    <location>
        <begin position="426"/>
        <end position="442"/>
    </location>
</feature>
<feature type="helix" evidence="16">
    <location>
        <begin position="456"/>
        <end position="464"/>
    </location>
</feature>
<feature type="helix" evidence="16">
    <location>
        <begin position="468"/>
        <end position="490"/>
    </location>
</feature>
<feature type="helix" evidence="16">
    <location>
        <begin position="499"/>
        <end position="517"/>
    </location>
</feature>
<feature type="helix" evidence="16">
    <location>
        <begin position="529"/>
        <end position="537"/>
    </location>
</feature>
<gene>
    <name evidence="7" type="primary">TPS1</name>
</gene>
<name>GTPS1_THYVU</name>
<dbReference type="EC" id="4.2.3.114" evidence="4"/>
<dbReference type="EC" id="4.2.3.115" evidence="2"/>
<dbReference type="EMBL" id="KR920616">
    <property type="protein sequence ID" value="ALB78115.1"/>
    <property type="molecule type" value="mRNA"/>
</dbReference>
<dbReference type="PDB" id="5C05">
    <property type="method" value="X-ray"/>
    <property type="resolution" value="1.65 A"/>
    <property type="chains" value="A/B=1-542"/>
</dbReference>
<dbReference type="PDBsum" id="5C05"/>
<dbReference type="SMR" id="A0A0M3Q1Q3"/>
<dbReference type="BRENDA" id="4.2.3.114">
    <property type="organism ID" value="12984"/>
</dbReference>
<dbReference type="UniPathway" id="UPA00213"/>
<dbReference type="EvolutionaryTrace" id="A0A0M3Q1Q3"/>
<dbReference type="GO" id="GO:0102903">
    <property type="term" value="F:gamma-terpinene synthase activity"/>
    <property type="evidence" value="ECO:0000314"/>
    <property type="project" value="UniProtKB"/>
</dbReference>
<dbReference type="GO" id="GO:0000287">
    <property type="term" value="F:magnesium ion binding"/>
    <property type="evidence" value="ECO:0007669"/>
    <property type="project" value="InterPro"/>
</dbReference>
<dbReference type="GO" id="GO:0042803">
    <property type="term" value="F:protein homodimerization activity"/>
    <property type="evidence" value="ECO:0000314"/>
    <property type="project" value="UniProtKB"/>
</dbReference>
<dbReference type="GO" id="GO:0010333">
    <property type="term" value="F:terpene synthase activity"/>
    <property type="evidence" value="ECO:0007669"/>
    <property type="project" value="InterPro"/>
</dbReference>
<dbReference type="GO" id="GO:0016102">
    <property type="term" value="P:diterpenoid biosynthetic process"/>
    <property type="evidence" value="ECO:0007669"/>
    <property type="project" value="InterPro"/>
</dbReference>
<dbReference type="GO" id="GO:0009753">
    <property type="term" value="P:response to jasmonic acid"/>
    <property type="evidence" value="ECO:0000270"/>
    <property type="project" value="UniProtKB"/>
</dbReference>
<dbReference type="GO" id="GO:0009751">
    <property type="term" value="P:response to salicylic acid"/>
    <property type="evidence" value="ECO:0000270"/>
    <property type="project" value="UniProtKB"/>
</dbReference>
<dbReference type="GO" id="GO:0010225">
    <property type="term" value="P:response to UV-C"/>
    <property type="evidence" value="ECO:0000270"/>
    <property type="project" value="UniProtKB"/>
</dbReference>
<dbReference type="CDD" id="cd00684">
    <property type="entry name" value="Terpene_cyclase_plant_C1"/>
    <property type="match status" value="1"/>
</dbReference>
<dbReference type="FunFam" id="1.10.600.10:FF:000007">
    <property type="entry name" value="Isoprene synthase, chloroplastic"/>
    <property type="match status" value="1"/>
</dbReference>
<dbReference type="FunFam" id="1.50.10.130:FF:000001">
    <property type="entry name" value="Isoprene synthase, chloroplastic"/>
    <property type="match status" value="1"/>
</dbReference>
<dbReference type="Gene3D" id="1.10.600.10">
    <property type="entry name" value="Farnesyl Diphosphate Synthase"/>
    <property type="match status" value="1"/>
</dbReference>
<dbReference type="Gene3D" id="1.50.10.130">
    <property type="entry name" value="Terpene synthase, N-terminal domain"/>
    <property type="match status" value="1"/>
</dbReference>
<dbReference type="InterPro" id="IPR008949">
    <property type="entry name" value="Isoprenoid_synthase_dom_sf"/>
</dbReference>
<dbReference type="InterPro" id="IPR044814">
    <property type="entry name" value="Terpene_cyclase_plant_C1"/>
</dbReference>
<dbReference type="InterPro" id="IPR001906">
    <property type="entry name" value="Terpene_synth_N"/>
</dbReference>
<dbReference type="InterPro" id="IPR036965">
    <property type="entry name" value="Terpene_synth_N_sf"/>
</dbReference>
<dbReference type="InterPro" id="IPR050148">
    <property type="entry name" value="Terpene_synthase-like"/>
</dbReference>
<dbReference type="InterPro" id="IPR005630">
    <property type="entry name" value="Terpene_synthase_metal-bd"/>
</dbReference>
<dbReference type="InterPro" id="IPR008930">
    <property type="entry name" value="Terpenoid_cyclase/PrenylTrfase"/>
</dbReference>
<dbReference type="PANTHER" id="PTHR31225">
    <property type="entry name" value="OS04G0344100 PROTEIN-RELATED"/>
    <property type="match status" value="1"/>
</dbReference>
<dbReference type="PANTHER" id="PTHR31225:SF9">
    <property type="entry name" value="TERPENE SYNTHASE 10"/>
    <property type="match status" value="1"/>
</dbReference>
<dbReference type="Pfam" id="PF01397">
    <property type="entry name" value="Terpene_synth"/>
    <property type="match status" value="1"/>
</dbReference>
<dbReference type="Pfam" id="PF03936">
    <property type="entry name" value="Terpene_synth_C"/>
    <property type="match status" value="1"/>
</dbReference>
<dbReference type="SFLD" id="SFLDS00005">
    <property type="entry name" value="Isoprenoid_Synthase_Type_I"/>
    <property type="match status" value="1"/>
</dbReference>
<dbReference type="SFLD" id="SFLDG01604">
    <property type="entry name" value="Terpene_Cyclase_Like_1_C_Termi"/>
    <property type="match status" value="1"/>
</dbReference>
<dbReference type="SUPFAM" id="SSF48239">
    <property type="entry name" value="Terpenoid cyclases/Protein prenyltransferases"/>
    <property type="match status" value="1"/>
</dbReference>
<dbReference type="SUPFAM" id="SSF48576">
    <property type="entry name" value="Terpenoid synthases"/>
    <property type="match status" value="1"/>
</dbReference>
<accession>A0A0M3Q1Q3</accession>
<protein>
    <recommendedName>
        <fullName evidence="7">Gamma-terpinene synthase 1</fullName>
        <ecNumber evidence="4">4.2.3.114</ecNumber>
    </recommendedName>
    <alternativeName>
        <fullName evidence="7">Alpha-terpinene synthase 1</fullName>
        <ecNumber evidence="2">4.2.3.115</ecNumber>
    </alternativeName>
    <alternativeName>
        <fullName evidence="7">Terpene synthase 1</fullName>
        <shortName evidence="7">TvTPS1</shortName>
    </alternativeName>
</protein>
<proteinExistence type="evidence at protein level"/>
<sequence length="542" mass="63274">MRRSGNYQAPVWNNDFIQSFSTDKYKDEKFLKKKEELIAQVKVLLNTKMEAVKQLELIEDLRNLGLTYYFEDEFKKILTSIYNEHKGFKNEQVGDLYFTSLAFRLLRLHGFDVSEDVFNFFKNEDGSDFKASLGENTKDVLELYEASFLIRVGEVTLEQARVFSTKILEKKVEEGIKDEKLLAWIQHSLALPLHWRIQRLEARWFLDAYKARKDMNPIIYELGKIDFHIIQETQLQEVQEVSQWWTNTNLAEKLPFVRDRIVECYFWALGLFEPHEYGYQRKMAAIIITFVTIIDDVYDVYDTLDELQLFTDAIRKWDVESISTLPYYMQVCYLAVFTYASELAYDILKDQGFNSISYLQRSWLSLVEGFFQEAKWYYAGYTPTLAEYLENAKVSISSPTIISQVYFTLPNSTERTVVENVFGYHNILYLSGMILRLADDLGTTQFELKRGDVQKAIQCYMNDNNATEEEGTEHVKYLLREAWQEMNSAMADPDCPLSEDLVFAAANLGRTSQFIYLDGDGHGVQHSEIHNQMGGLIFEPYV</sequence>
<organism>
    <name type="scientific">Thymus vulgaris</name>
    <name type="common">Thyme</name>
    <dbReference type="NCBI Taxonomy" id="49992"/>
    <lineage>
        <taxon>Eukaryota</taxon>
        <taxon>Viridiplantae</taxon>
        <taxon>Streptophyta</taxon>
        <taxon>Embryophyta</taxon>
        <taxon>Tracheophyta</taxon>
        <taxon>Spermatophyta</taxon>
        <taxon>Magnoliopsida</taxon>
        <taxon>eudicotyledons</taxon>
        <taxon>Gunneridae</taxon>
        <taxon>Pentapetalae</taxon>
        <taxon>asterids</taxon>
        <taxon>lamiids</taxon>
        <taxon>Lamiales</taxon>
        <taxon>Lamiaceae</taxon>
        <taxon>Nepetoideae</taxon>
        <taxon>Mentheae</taxon>
        <taxon>Thymus</taxon>
    </lineage>
</organism>
<keyword id="KW-0002">3D-structure</keyword>
<keyword id="KW-0456">Lyase</keyword>
<keyword id="KW-0460">Magnesium</keyword>
<keyword id="KW-0464">Manganese</keyword>
<keyword id="KW-0479">Metal-binding</keyword>